<feature type="chain" id="PRO_0000107619" description="Acetate kinase">
    <location>
        <begin position="1"/>
        <end position="397"/>
    </location>
</feature>
<feature type="active site" description="Proton donor/acceptor" evidence="1">
    <location>
        <position position="146"/>
    </location>
</feature>
<feature type="binding site" evidence="1">
    <location>
        <position position="8"/>
    </location>
    <ligand>
        <name>Mg(2+)</name>
        <dbReference type="ChEBI" id="CHEBI:18420"/>
    </ligand>
</feature>
<feature type="binding site" evidence="1">
    <location>
        <position position="15"/>
    </location>
    <ligand>
        <name>ATP</name>
        <dbReference type="ChEBI" id="CHEBI:30616"/>
    </ligand>
</feature>
<feature type="binding site" evidence="1">
    <location>
        <position position="89"/>
    </location>
    <ligand>
        <name>substrate</name>
    </ligand>
</feature>
<feature type="binding site" evidence="1">
    <location>
        <begin position="206"/>
        <end position="210"/>
    </location>
    <ligand>
        <name>ATP</name>
        <dbReference type="ChEBI" id="CHEBI:30616"/>
    </ligand>
</feature>
<feature type="binding site" evidence="1">
    <location>
        <begin position="283"/>
        <end position="285"/>
    </location>
    <ligand>
        <name>ATP</name>
        <dbReference type="ChEBI" id="CHEBI:30616"/>
    </ligand>
</feature>
<feature type="binding site" evidence="1">
    <location>
        <begin position="331"/>
        <end position="335"/>
    </location>
    <ligand>
        <name>ATP</name>
        <dbReference type="ChEBI" id="CHEBI:30616"/>
    </ligand>
</feature>
<feature type="binding site" evidence="1">
    <location>
        <position position="383"/>
    </location>
    <ligand>
        <name>Mg(2+)</name>
        <dbReference type="ChEBI" id="CHEBI:18420"/>
    </ligand>
</feature>
<feature type="site" description="Transition state stabilizer" evidence="1">
    <location>
        <position position="178"/>
    </location>
</feature>
<feature type="site" description="Transition state stabilizer" evidence="1">
    <location>
        <position position="239"/>
    </location>
</feature>
<reference key="1">
    <citation type="journal article" date="2002" name="Proc. Natl. Acad. Sci. U.S.A.">
        <title>Complete genome sequence and comparative genomic analysis of an emerging human pathogen, serotype V Streptococcus agalactiae.</title>
        <authorList>
            <person name="Tettelin H."/>
            <person name="Masignani V."/>
            <person name="Cieslewicz M.J."/>
            <person name="Eisen J.A."/>
            <person name="Peterson S.N."/>
            <person name="Wessels M.R."/>
            <person name="Paulsen I.T."/>
            <person name="Nelson K.E."/>
            <person name="Margarit I."/>
            <person name="Read T.D."/>
            <person name="Madoff L.C."/>
            <person name="Wolf A.M."/>
            <person name="Beanan M.J."/>
            <person name="Brinkac L.M."/>
            <person name="Daugherty S.C."/>
            <person name="DeBoy R.T."/>
            <person name="Durkin A.S."/>
            <person name="Kolonay J.F."/>
            <person name="Madupu R."/>
            <person name="Lewis M.R."/>
            <person name="Radune D."/>
            <person name="Fedorova N.B."/>
            <person name="Scanlan D."/>
            <person name="Khouri H.M."/>
            <person name="Mulligan S."/>
            <person name="Carty H.A."/>
            <person name="Cline R.T."/>
            <person name="Van Aken S.E."/>
            <person name="Gill J."/>
            <person name="Scarselli M."/>
            <person name="Mora M."/>
            <person name="Iacobini E.T."/>
            <person name="Brettoni C."/>
            <person name="Galli G."/>
            <person name="Mariani M."/>
            <person name="Vegni F."/>
            <person name="Maione D."/>
            <person name="Rinaudo D."/>
            <person name="Rappuoli R."/>
            <person name="Telford J.L."/>
            <person name="Kasper D.L."/>
            <person name="Grandi G."/>
            <person name="Fraser C.M."/>
        </authorList>
    </citation>
    <scope>NUCLEOTIDE SEQUENCE [LARGE SCALE GENOMIC DNA]</scope>
    <source>
        <strain>ATCC BAA-611 / 2603 V/R</strain>
    </source>
</reference>
<gene>
    <name evidence="1" type="primary">ackA</name>
    <name type="ordered locus">SAG0168</name>
</gene>
<dbReference type="EC" id="2.7.2.1" evidence="1"/>
<dbReference type="EMBL" id="AE009948">
    <property type="protein sequence ID" value="AAM99075.1"/>
    <property type="molecule type" value="Genomic_DNA"/>
</dbReference>
<dbReference type="RefSeq" id="NP_687203.1">
    <property type="nucleotide sequence ID" value="NC_004116.1"/>
</dbReference>
<dbReference type="RefSeq" id="WP_000047534.1">
    <property type="nucleotide sequence ID" value="NC_004116.1"/>
</dbReference>
<dbReference type="SMR" id="Q8E231"/>
<dbReference type="STRING" id="208435.SAG0168"/>
<dbReference type="KEGG" id="sag:SAG0168"/>
<dbReference type="PATRIC" id="fig|208435.3.peg.168"/>
<dbReference type="HOGENOM" id="CLU_020352_0_1_9"/>
<dbReference type="OrthoDB" id="9802453at2"/>
<dbReference type="UniPathway" id="UPA00340">
    <property type="reaction ID" value="UER00458"/>
</dbReference>
<dbReference type="Proteomes" id="UP000000821">
    <property type="component" value="Chromosome"/>
</dbReference>
<dbReference type="GO" id="GO:0005737">
    <property type="term" value="C:cytoplasm"/>
    <property type="evidence" value="ECO:0007669"/>
    <property type="project" value="UniProtKB-SubCell"/>
</dbReference>
<dbReference type="GO" id="GO:0008776">
    <property type="term" value="F:acetate kinase activity"/>
    <property type="evidence" value="ECO:0007669"/>
    <property type="project" value="UniProtKB-UniRule"/>
</dbReference>
<dbReference type="GO" id="GO:0005524">
    <property type="term" value="F:ATP binding"/>
    <property type="evidence" value="ECO:0007669"/>
    <property type="project" value="UniProtKB-KW"/>
</dbReference>
<dbReference type="GO" id="GO:0000287">
    <property type="term" value="F:magnesium ion binding"/>
    <property type="evidence" value="ECO:0007669"/>
    <property type="project" value="UniProtKB-UniRule"/>
</dbReference>
<dbReference type="GO" id="GO:0006083">
    <property type="term" value="P:acetate metabolic process"/>
    <property type="evidence" value="ECO:0007669"/>
    <property type="project" value="TreeGrafter"/>
</dbReference>
<dbReference type="GO" id="GO:0006085">
    <property type="term" value="P:acetyl-CoA biosynthetic process"/>
    <property type="evidence" value="ECO:0007669"/>
    <property type="project" value="UniProtKB-UniRule"/>
</dbReference>
<dbReference type="CDD" id="cd24010">
    <property type="entry name" value="ASKHA_NBD_AcK_PK"/>
    <property type="match status" value="1"/>
</dbReference>
<dbReference type="Gene3D" id="3.30.420.40">
    <property type="match status" value="2"/>
</dbReference>
<dbReference type="HAMAP" id="MF_00020">
    <property type="entry name" value="Acetate_kinase"/>
    <property type="match status" value="1"/>
</dbReference>
<dbReference type="InterPro" id="IPR004372">
    <property type="entry name" value="Ac/propionate_kinase"/>
</dbReference>
<dbReference type="InterPro" id="IPR000890">
    <property type="entry name" value="Aliphatic_acid_kin_short-chain"/>
</dbReference>
<dbReference type="InterPro" id="IPR023865">
    <property type="entry name" value="Aliphatic_acid_kinase_CS"/>
</dbReference>
<dbReference type="InterPro" id="IPR043129">
    <property type="entry name" value="ATPase_NBD"/>
</dbReference>
<dbReference type="NCBIfam" id="TIGR00016">
    <property type="entry name" value="ackA"/>
    <property type="match status" value="1"/>
</dbReference>
<dbReference type="PANTHER" id="PTHR21060">
    <property type="entry name" value="ACETATE KINASE"/>
    <property type="match status" value="1"/>
</dbReference>
<dbReference type="PANTHER" id="PTHR21060:SF15">
    <property type="entry name" value="ACETATE KINASE-RELATED"/>
    <property type="match status" value="1"/>
</dbReference>
<dbReference type="Pfam" id="PF00871">
    <property type="entry name" value="Acetate_kinase"/>
    <property type="match status" value="1"/>
</dbReference>
<dbReference type="PIRSF" id="PIRSF000722">
    <property type="entry name" value="Acetate_prop_kin"/>
    <property type="match status" value="1"/>
</dbReference>
<dbReference type="PRINTS" id="PR00471">
    <property type="entry name" value="ACETATEKNASE"/>
</dbReference>
<dbReference type="SUPFAM" id="SSF53067">
    <property type="entry name" value="Actin-like ATPase domain"/>
    <property type="match status" value="2"/>
</dbReference>
<dbReference type="PROSITE" id="PS01075">
    <property type="entry name" value="ACETATE_KINASE_1"/>
    <property type="match status" value="1"/>
</dbReference>
<dbReference type="PROSITE" id="PS01076">
    <property type="entry name" value="ACETATE_KINASE_2"/>
    <property type="match status" value="1"/>
</dbReference>
<protein>
    <recommendedName>
        <fullName evidence="1">Acetate kinase</fullName>
        <ecNumber evidence="1">2.7.2.1</ecNumber>
    </recommendedName>
    <alternativeName>
        <fullName evidence="1">Acetokinase</fullName>
    </alternativeName>
</protein>
<comment type="function">
    <text evidence="1">Catalyzes the formation of acetyl phosphate from acetate and ATP. Can also catalyze the reverse reaction.</text>
</comment>
<comment type="catalytic activity">
    <reaction evidence="1">
        <text>acetate + ATP = acetyl phosphate + ADP</text>
        <dbReference type="Rhea" id="RHEA:11352"/>
        <dbReference type="ChEBI" id="CHEBI:22191"/>
        <dbReference type="ChEBI" id="CHEBI:30089"/>
        <dbReference type="ChEBI" id="CHEBI:30616"/>
        <dbReference type="ChEBI" id="CHEBI:456216"/>
        <dbReference type="EC" id="2.7.2.1"/>
    </reaction>
</comment>
<comment type="cofactor">
    <cofactor evidence="1">
        <name>Mg(2+)</name>
        <dbReference type="ChEBI" id="CHEBI:18420"/>
    </cofactor>
    <cofactor evidence="1">
        <name>Mn(2+)</name>
        <dbReference type="ChEBI" id="CHEBI:29035"/>
    </cofactor>
    <text evidence="1">Mg(2+). Can also accept Mn(2+).</text>
</comment>
<comment type="pathway">
    <text evidence="1">Metabolic intermediate biosynthesis; acetyl-CoA biosynthesis; acetyl-CoA from acetate: step 1/2.</text>
</comment>
<comment type="subunit">
    <text evidence="1">Homodimer.</text>
</comment>
<comment type="subcellular location">
    <subcellularLocation>
        <location evidence="1">Cytoplasm</location>
    </subcellularLocation>
</comment>
<comment type="similarity">
    <text evidence="1">Belongs to the acetokinase family.</text>
</comment>
<sequence length="397" mass="43452">MSKTIAINAGSSSLKWQLYEMPEEKVVAKGIIERIGLKDSISTVKFDDKKDEQILDIVDHTQAVKILLEDLTKHGIIKDFNEITGVGHRVVAGGEYFKESALVDDKVVEQVEELSALAPLHNPAAAAGIRAFREILPDITSVCVFDTAFHTTMQPHTYLYPIPQKYYTDYKVRKYGAHGTSHQYVAQEAAKQLGRPLEELKLITAHVGNGVSITANYHGQSIDTSMGFTPLAGPMMGTRSGDIDPAIIPYLVANDPELEDAAAVVNMLNKQSGLLGVSGTSSDMRDIEAGLQSKDPNAVLAYNVFIDRIKKFIGQYLAVLNGADAIIFTAGMGENAPLMRQDVIAGLSWFGIELDPEKNVFGYFGDITKPDSKVKVLVIPTDEELMIARDVERLKAK</sequence>
<organism>
    <name type="scientific">Streptococcus agalactiae serotype V (strain ATCC BAA-611 / 2603 V/R)</name>
    <dbReference type="NCBI Taxonomy" id="208435"/>
    <lineage>
        <taxon>Bacteria</taxon>
        <taxon>Bacillati</taxon>
        <taxon>Bacillota</taxon>
        <taxon>Bacilli</taxon>
        <taxon>Lactobacillales</taxon>
        <taxon>Streptococcaceae</taxon>
        <taxon>Streptococcus</taxon>
    </lineage>
</organism>
<accession>Q8E231</accession>
<evidence type="ECO:0000255" key="1">
    <source>
        <dbReference type="HAMAP-Rule" id="MF_00020"/>
    </source>
</evidence>
<keyword id="KW-0067">ATP-binding</keyword>
<keyword id="KW-0963">Cytoplasm</keyword>
<keyword id="KW-0418">Kinase</keyword>
<keyword id="KW-0460">Magnesium</keyword>
<keyword id="KW-0479">Metal-binding</keyword>
<keyword id="KW-0547">Nucleotide-binding</keyword>
<keyword id="KW-1185">Reference proteome</keyword>
<keyword id="KW-0808">Transferase</keyword>
<proteinExistence type="inferred from homology"/>
<name>ACKA_STRA5</name>